<accession>P0C772</accession>
<dbReference type="EMBL" id="AY316199">
    <property type="status" value="NOT_ANNOTATED_CDS"/>
    <property type="molecule type" value="Genomic_RNA"/>
</dbReference>
<dbReference type="EMBL" id="AY344234">
    <property type="status" value="NOT_ANNOTATED_CDS"/>
    <property type="molecule type" value="Genomic_RNA"/>
</dbReference>
<dbReference type="EMBL" id="AY729654">
    <property type="status" value="NOT_ANNOTATED_CDS"/>
    <property type="molecule type" value="Genomic_RNA"/>
</dbReference>
<dbReference type="SMR" id="P0C772"/>
<dbReference type="GlyCosmos" id="P0C772">
    <property type="glycosylation" value="6 sites, No reported glycans"/>
</dbReference>
<dbReference type="Proteomes" id="UP000000277">
    <property type="component" value="Segment"/>
</dbReference>
<dbReference type="GO" id="GO:0005576">
    <property type="term" value="C:extracellular region"/>
    <property type="evidence" value="ECO:0007669"/>
    <property type="project" value="UniProtKB-SubCell"/>
</dbReference>
<dbReference type="InterPro" id="IPR002561">
    <property type="entry name" value="GPC_filovir-type_extra_dom"/>
</dbReference>
<dbReference type="Pfam" id="PF01611">
    <property type="entry name" value="Filo_glycop"/>
    <property type="match status" value="1"/>
</dbReference>
<protein>
    <recommendedName>
        <fullName>Super small secreted glycoprotein</fullName>
        <shortName>SsGP</shortName>
    </recommendedName>
</protein>
<organism>
    <name type="scientific">Sudan ebolavirus (strain Human/Uganda/Gulu/2000)</name>
    <name type="common">SEBOV</name>
    <name type="synonym">Sudan Ebola virus</name>
    <dbReference type="NCBI Taxonomy" id="386033"/>
    <lineage>
        <taxon>Viruses</taxon>
        <taxon>Riboviria</taxon>
        <taxon>Orthornavirae</taxon>
        <taxon>Negarnaviricota</taxon>
        <taxon>Haploviricotina</taxon>
        <taxon>Monjiviricetes</taxon>
        <taxon>Mononegavirales</taxon>
        <taxon>Filoviridae</taxon>
        <taxon>Orthoebolavirus</taxon>
        <taxon>Orthoebolavirus sudanense</taxon>
        <taxon>Sudan ebolavirus</taxon>
    </lineage>
</organism>
<sequence length="319" mass="36274">MGGLSLLQLPRDKFRKSSFFVWVIILFQKAFSMPLGVVTNSTLEVTEIDQLVCKDHLASTDQLKSVGLNLEGSGVSTDIPSATKRWGFRSGVPPKVVSYEAGEWAENCYNLEIKKPDGSECLPPPPDGVRGFPRCRYVHKAQGTGPCPGDYAFHKDGAFFLYDRLASTVIYRGVNFAEGVIAFLILAKPKETFLQSPPIREAVNYTENTSSYYATSYLEYEIENFGAQHSTTLFKIDNNTFVRLDRPHTPQFLFQLNDTIHLHQQLSNTTGRLIWTLDANINADIGEWAFWENKKKSLRTTTWRRAVFRSFIAQRDRRR</sequence>
<evidence type="ECO:0000250" key="1"/>
<evidence type="ECO:0000255" key="2"/>
<evidence type="ECO:0000305" key="3"/>
<keyword id="KW-1015">Disulfide bond</keyword>
<keyword id="KW-0325">Glycoprotein</keyword>
<keyword id="KW-0691">RNA editing</keyword>
<keyword id="KW-0964">Secreted</keyword>
<keyword id="KW-0732">Signal</keyword>
<proteinExistence type="inferred from homology"/>
<feature type="signal peptide" evidence="2">
    <location>
        <begin position="1"/>
        <end position="32"/>
    </location>
</feature>
<feature type="chain" id="PRO_0000391496" description="Super small secreted glycoprotein">
    <location>
        <begin position="33"/>
        <end position="319"/>
    </location>
</feature>
<feature type="glycosylation site" description="N-linked (GlcNAc...) asparagine; by host" evidence="2">
    <location>
        <position position="40"/>
    </location>
</feature>
<feature type="glycosylation site" description="N-linked (GlcNAc...) asparagine; by host" evidence="2">
    <location>
        <position position="204"/>
    </location>
</feature>
<feature type="glycosylation site" description="N-linked (GlcNAc...) asparagine; by host" evidence="2">
    <location>
        <position position="208"/>
    </location>
</feature>
<feature type="glycosylation site" description="N-linked (GlcNAc...) asparagine; by host" evidence="2">
    <location>
        <position position="238"/>
    </location>
</feature>
<feature type="glycosylation site" description="N-linked (GlcNAc...) asparagine; by host" evidence="2">
    <location>
        <position position="257"/>
    </location>
</feature>
<feature type="glycosylation site" description="N-linked (GlcNAc...) asparagine; by host" evidence="2">
    <location>
        <position position="268"/>
    </location>
</feature>
<feature type="disulfide bond" description="Interchain" evidence="1">
    <location>
        <position position="53"/>
    </location>
</feature>
<feature type="disulfide bond" evidence="1">
    <location>
        <begin position="108"/>
        <end position="135"/>
    </location>
</feature>
<feature type="disulfide bond" evidence="1">
    <location>
        <begin position="121"/>
        <end position="147"/>
    </location>
</feature>
<comment type="subcellular location">
    <subcellularLocation>
        <location evidence="3">Secreted</location>
    </subcellularLocation>
</comment>
<comment type="RNA editing">
    <location>
        <position position="295"/>
    </location>
    <text>Partially edited. RNA editing at this position consists of an insertion of one or two adenine nucleotides. The sequence displayed here is the super small secreted glycoprotein ssGP, derived from the +2A edited RNA. The unedited RNA gives rise to the small secreted glycoprotein sGP (AC Q7T9E0), the +1A edited RNA gives rise to the full-length transmembrane glycoprotein GP (AC Q7T9D9).</text>
</comment>
<comment type="similarity">
    <text evidence="3">Belongs to the filoviruses glycoprotein family.</text>
</comment>
<organismHost>
    <name type="scientific">Epomops franqueti</name>
    <name type="common">Franquet's epauletted fruit bat</name>
    <name type="synonym">Epomophorus franqueti</name>
    <dbReference type="NCBI Taxonomy" id="77231"/>
</organismHost>
<organismHost>
    <name type="scientific">Homo sapiens</name>
    <name type="common">Human</name>
    <dbReference type="NCBI Taxonomy" id="9606"/>
</organismHost>
<organismHost>
    <name type="scientific">Myonycteris torquata</name>
    <name type="common">Little collared fruit bat</name>
    <dbReference type="NCBI Taxonomy" id="77243"/>
</organismHost>
<name>VSSGP_EBOSU</name>
<gene>
    <name type="primary">GP</name>
</gene>
<reference key="1">
    <citation type="journal article" date="2004" name="J. Virol.">
        <title>Analysis of human peripheral blood samples from fatal and nonfatal cases of Ebola (Sudan) hemorrhagic fever: cellular responses, virus load, and nitric oxide levels.</title>
        <authorList>
            <person name="Sanchez A."/>
            <person name="Lukwiya M."/>
            <person name="Bausch D."/>
            <person name="Mahanty S."/>
            <person name="Sanchez A.J."/>
            <person name="Wagoner K.D."/>
            <person name="Rollin P.E."/>
        </authorList>
    </citation>
    <scope>NUCLEOTIDE SEQUENCE [GENOMIC RNA]</scope>
</reference>
<reference key="2">
    <citation type="journal article" date="2004" name="J. Virol.">
        <title>Rapid diagnosis of Ebola hemorrhagic fever by reverse transcription-PCR in an outbreak setting and assessment of patient viral load as a predictor of outcome.</title>
        <authorList>
            <person name="Towner J.S."/>
            <person name="Rollin P.E."/>
            <person name="Bausch D.G."/>
            <person name="Sanchez A."/>
            <person name="Crary S.M."/>
            <person name="Vincent M."/>
            <person name="Lee W.F."/>
            <person name="Spiropoulou C.F."/>
            <person name="Ksiazek T.G."/>
            <person name="Lukwiya M."/>
            <person name="Kaducu F."/>
            <person name="Downing R."/>
            <person name="Nichol S.T."/>
        </authorList>
    </citation>
    <scope>NUCLEOTIDE SEQUENCE [GENOMIC RNA]</scope>
</reference>
<reference key="3">
    <citation type="journal article" date="2005" name="Virus Res.">
        <title>Complete genome sequence of an Ebola virus (Sudan species) responsible for a 2000 outbreak of human disease in Uganda.</title>
        <authorList>
            <person name="Sanchez A."/>
            <person name="Rollin P.E."/>
        </authorList>
    </citation>
    <scope>NUCLEOTIDE SEQUENCE [GENOMIC RNA]</scope>
</reference>